<accession>Q2S6M5</accession>
<protein>
    <recommendedName>
        <fullName evidence="1">Membrane protein insertase YidC</fullName>
    </recommendedName>
    <alternativeName>
        <fullName evidence="1">Foldase YidC</fullName>
    </alternativeName>
    <alternativeName>
        <fullName evidence="1">Membrane integrase YidC</fullName>
    </alternativeName>
    <alternativeName>
        <fullName evidence="1">Membrane protein YidC</fullName>
    </alternativeName>
</protein>
<keyword id="KW-0997">Cell inner membrane</keyword>
<keyword id="KW-1003">Cell membrane</keyword>
<keyword id="KW-0143">Chaperone</keyword>
<keyword id="KW-0472">Membrane</keyword>
<keyword id="KW-0653">Protein transport</keyword>
<keyword id="KW-1185">Reference proteome</keyword>
<keyword id="KW-0812">Transmembrane</keyword>
<keyword id="KW-1133">Transmembrane helix</keyword>
<keyword id="KW-0813">Transport</keyword>
<organism>
    <name type="scientific">Hahella chejuensis (strain KCTC 2396)</name>
    <dbReference type="NCBI Taxonomy" id="349521"/>
    <lineage>
        <taxon>Bacteria</taxon>
        <taxon>Pseudomonadati</taxon>
        <taxon>Pseudomonadota</taxon>
        <taxon>Gammaproteobacteria</taxon>
        <taxon>Oceanospirillales</taxon>
        <taxon>Hahellaceae</taxon>
        <taxon>Hahella</taxon>
    </lineage>
</organism>
<dbReference type="EMBL" id="CP000155">
    <property type="protein sequence ID" value="ABC33699.1"/>
    <property type="molecule type" value="Genomic_DNA"/>
</dbReference>
<dbReference type="RefSeq" id="WP_011400749.1">
    <property type="nucleotide sequence ID" value="NC_007645.1"/>
</dbReference>
<dbReference type="SMR" id="Q2S6M5"/>
<dbReference type="STRING" id="349521.HCH_07087"/>
<dbReference type="KEGG" id="hch:HCH_07087"/>
<dbReference type="eggNOG" id="COG0706">
    <property type="taxonomic scope" value="Bacteria"/>
</dbReference>
<dbReference type="HOGENOM" id="CLU_016535_3_0_6"/>
<dbReference type="OrthoDB" id="9780552at2"/>
<dbReference type="Proteomes" id="UP000000238">
    <property type="component" value="Chromosome"/>
</dbReference>
<dbReference type="GO" id="GO:0005886">
    <property type="term" value="C:plasma membrane"/>
    <property type="evidence" value="ECO:0007669"/>
    <property type="project" value="UniProtKB-SubCell"/>
</dbReference>
<dbReference type="GO" id="GO:0032977">
    <property type="term" value="F:membrane insertase activity"/>
    <property type="evidence" value="ECO:0007669"/>
    <property type="project" value="InterPro"/>
</dbReference>
<dbReference type="GO" id="GO:0051205">
    <property type="term" value="P:protein insertion into membrane"/>
    <property type="evidence" value="ECO:0007669"/>
    <property type="project" value="TreeGrafter"/>
</dbReference>
<dbReference type="GO" id="GO:0015031">
    <property type="term" value="P:protein transport"/>
    <property type="evidence" value="ECO:0007669"/>
    <property type="project" value="UniProtKB-KW"/>
</dbReference>
<dbReference type="CDD" id="cd20070">
    <property type="entry name" value="5TM_YidC_Alb3"/>
    <property type="match status" value="1"/>
</dbReference>
<dbReference type="CDD" id="cd19961">
    <property type="entry name" value="EcYidC-like_peri"/>
    <property type="match status" value="1"/>
</dbReference>
<dbReference type="Gene3D" id="2.70.98.90">
    <property type="match status" value="1"/>
</dbReference>
<dbReference type="HAMAP" id="MF_01810">
    <property type="entry name" value="YidC_type1"/>
    <property type="match status" value="1"/>
</dbReference>
<dbReference type="InterPro" id="IPR019998">
    <property type="entry name" value="Membr_insert_YidC"/>
</dbReference>
<dbReference type="InterPro" id="IPR028053">
    <property type="entry name" value="Membr_insert_YidC_N"/>
</dbReference>
<dbReference type="InterPro" id="IPR001708">
    <property type="entry name" value="YidC/ALB3/OXA1/COX18"/>
</dbReference>
<dbReference type="InterPro" id="IPR028055">
    <property type="entry name" value="YidC/Oxa/ALB_C"/>
</dbReference>
<dbReference type="InterPro" id="IPR047196">
    <property type="entry name" value="YidC_ALB_C"/>
</dbReference>
<dbReference type="InterPro" id="IPR038221">
    <property type="entry name" value="YidC_periplasmic_sf"/>
</dbReference>
<dbReference type="NCBIfam" id="NF002352">
    <property type="entry name" value="PRK01318.1-3"/>
    <property type="match status" value="1"/>
</dbReference>
<dbReference type="NCBIfam" id="NF002353">
    <property type="entry name" value="PRK01318.1-4"/>
    <property type="match status" value="1"/>
</dbReference>
<dbReference type="NCBIfam" id="TIGR03593">
    <property type="entry name" value="yidC_nterm"/>
    <property type="match status" value="1"/>
</dbReference>
<dbReference type="NCBIfam" id="TIGR03592">
    <property type="entry name" value="yidC_oxa1_cterm"/>
    <property type="match status" value="1"/>
</dbReference>
<dbReference type="PANTHER" id="PTHR12428:SF65">
    <property type="entry name" value="CYTOCHROME C OXIDASE ASSEMBLY PROTEIN COX18, MITOCHONDRIAL"/>
    <property type="match status" value="1"/>
</dbReference>
<dbReference type="PANTHER" id="PTHR12428">
    <property type="entry name" value="OXA1"/>
    <property type="match status" value="1"/>
</dbReference>
<dbReference type="Pfam" id="PF02096">
    <property type="entry name" value="60KD_IMP"/>
    <property type="match status" value="1"/>
</dbReference>
<dbReference type="Pfam" id="PF14849">
    <property type="entry name" value="YidC_periplas"/>
    <property type="match status" value="1"/>
</dbReference>
<dbReference type="PRINTS" id="PR00701">
    <property type="entry name" value="60KDINNERMP"/>
</dbReference>
<dbReference type="PRINTS" id="PR01900">
    <property type="entry name" value="YIDCPROTEIN"/>
</dbReference>
<proteinExistence type="inferred from homology"/>
<feature type="chain" id="PRO_1000070106" description="Membrane protein insertase YidC">
    <location>
        <begin position="1"/>
        <end position="570"/>
    </location>
</feature>
<feature type="transmembrane region" description="Helical" evidence="1">
    <location>
        <begin position="230"/>
        <end position="250"/>
    </location>
</feature>
<feature type="transmembrane region" description="Helical" evidence="1">
    <location>
        <begin position="378"/>
        <end position="398"/>
    </location>
</feature>
<feature type="transmembrane region" description="Helical" evidence="1">
    <location>
        <begin position="444"/>
        <end position="464"/>
    </location>
</feature>
<feature type="transmembrane region" description="Helical" evidence="1">
    <location>
        <begin position="487"/>
        <end position="507"/>
    </location>
</feature>
<feature type="transmembrane region" description="Helical" evidence="1">
    <location>
        <begin position="522"/>
        <end position="542"/>
    </location>
</feature>
<feature type="region of interest" description="Disordered" evidence="2">
    <location>
        <begin position="31"/>
        <end position="79"/>
    </location>
</feature>
<feature type="compositionally biased region" description="Polar residues" evidence="2">
    <location>
        <begin position="31"/>
        <end position="60"/>
    </location>
</feature>
<comment type="function">
    <text evidence="1">Required for the insertion and/or proper folding and/or complex formation of integral membrane proteins into the membrane. Involved in integration of membrane proteins that insert both dependently and independently of the Sec translocase complex, as well as at least some lipoproteins. Aids folding of multispanning membrane proteins.</text>
</comment>
<comment type="subunit">
    <text evidence="1">Interacts with the Sec translocase complex via SecD. Specifically interacts with transmembrane segments of nascent integral membrane proteins during membrane integration.</text>
</comment>
<comment type="subcellular location">
    <subcellularLocation>
        <location evidence="1">Cell inner membrane</location>
        <topology evidence="1">Multi-pass membrane protein</topology>
    </subcellularLocation>
</comment>
<comment type="similarity">
    <text evidence="1">Belongs to the OXA1/ALB3/YidC family. Type 1 subfamily.</text>
</comment>
<evidence type="ECO:0000255" key="1">
    <source>
        <dbReference type="HAMAP-Rule" id="MF_01810"/>
    </source>
</evidence>
<evidence type="ECO:0000256" key="2">
    <source>
        <dbReference type="SAM" id="MobiDB-lite"/>
    </source>
</evidence>
<reference key="1">
    <citation type="journal article" date="2005" name="Nucleic Acids Res.">
        <title>Genomic blueprint of Hahella chejuensis, a marine microbe producing an algicidal agent.</title>
        <authorList>
            <person name="Jeong H."/>
            <person name="Yim J.H."/>
            <person name="Lee C."/>
            <person name="Choi S.-H."/>
            <person name="Park Y.K."/>
            <person name="Yoon S.H."/>
            <person name="Hur C.-G."/>
            <person name="Kang H.-Y."/>
            <person name="Kim D."/>
            <person name="Lee H.H."/>
            <person name="Park K.H."/>
            <person name="Park S.-H."/>
            <person name="Park H.-S."/>
            <person name="Lee H.K."/>
            <person name="Oh T.K."/>
            <person name="Kim J.F."/>
        </authorList>
    </citation>
    <scope>NUCLEOTIDE SEQUENCE [LARGE SCALE GENOMIC DNA]</scope>
    <source>
        <strain>KCTC 2396</strain>
    </source>
</reference>
<name>YIDC_HAHCH</name>
<gene>
    <name evidence="1" type="primary">yidC</name>
    <name type="ordered locus">HCH_07087</name>
</gene>
<sequence length="570" mass="63624">MDFLRTSLIVGLLVVSYLLVLEWNEDMSPQQQPVAQTPSVTIDSNGADSSALLNSPNTGELDTPETASKPATAEDSNISSTASSGKIITVITDVLRVEIDLNGGNVVEASLLQYPISLKNPTPLDLMQKNNGVYYVAASSLIGANGFDDSKNGGNPIYIAEKNSYSLQEGQDKLSVDLRTERDGVTIVKRYEFEKSSYSINVNFQINNQSDAPWKANFSAKLVRDKSPDPTFSGGFGAASFLGAVVSTPEKPYEKIDFSDMEESGPSGVKVNSSNGWIAFIQHYFVSAWIPLSNDTHTYQTRLRNGLYLMGFVDPEFTVEPGQTHNVGAKLYAGPKIMETLKEVAPNLDLTVDFGWLWLIAKPLYLVLEFIHDYVGNWGIAIILLTVLIKALFFHLSATSYRSMANMRRVTPEMQRIREQYGDDRQRMSQAMMELYKKEKINPLGGCLPMLVQMPVFISLYWVLLESVQLRQAPFFFWIQDLSIKDPYFVLPLLMGAAMFLQTSLNPTPPDPIQARVMKMMPIIFTVFFLWFPAGLVLYWLVNNILSIAQQWYITKKIENGGLAAKKIAS</sequence>